<gene>
    <name type="primary">MT-II</name>
    <name type="ordered locus">CAGL0H04257g</name>
</gene>
<gene>
    <name type="primary">MT-IIB</name>
    <name type="ordered locus">CAGL0H04279g</name>
</gene>
<evidence type="ECO:0000269" key="1">
    <source>
    </source>
</evidence>
<evidence type="ECO:0000305" key="2"/>
<proteinExistence type="evidence at protein level"/>
<reference key="1">
    <citation type="journal article" date="1989" name="J. Biol. Chem.">
        <title>Candida glabrata metallothioneins. Cloning and sequence of the genes and characterization of proteins.</title>
        <authorList>
            <person name="Mehra R.K."/>
            <person name="Garey J.R."/>
            <person name="Butt T.R."/>
            <person name="Gray W.R."/>
            <person name="Winge D.R."/>
        </authorList>
    </citation>
    <scope>NUCLEOTIDE SEQUENCE [GENOMIC DNA]</scope>
    <scope>PROTEIN SEQUENCE OF 20-39</scope>
</reference>
<reference key="2">
    <citation type="journal article" date="1990" name="J. Biol. Chem.">
        <title>Selective and tandem amplification of a member of the metallothionein gene family in Candida glabrata.</title>
        <authorList>
            <person name="Mehra R.K."/>
            <person name="Garey J.R."/>
            <person name="Winge D.R."/>
        </authorList>
    </citation>
    <scope>NUCLEOTIDE SEQUENCE [GENOMIC DNA]</scope>
</reference>
<reference key="3">
    <citation type="journal article" date="1992" name="Gene">
        <title>Disruption analysis of metallothionein-encoding genes in Candida glabrata.</title>
        <authorList>
            <person name="Mehra R.K."/>
            <person name="Thorvaldsen J.L."/>
            <person name="Macreadie I.G."/>
            <person name="Winge D.R."/>
        </authorList>
    </citation>
    <scope>NUCLEOTIDE SEQUENCE [GENOMIC DNA]</scope>
</reference>
<reference key="4">
    <citation type="journal article" date="2004" name="Nature">
        <title>Genome evolution in yeasts.</title>
        <authorList>
            <person name="Dujon B."/>
            <person name="Sherman D."/>
            <person name="Fischer G."/>
            <person name="Durrens P."/>
            <person name="Casaregola S."/>
            <person name="Lafontaine I."/>
            <person name="de Montigny J."/>
            <person name="Marck C."/>
            <person name="Neuveglise C."/>
            <person name="Talla E."/>
            <person name="Goffard N."/>
            <person name="Frangeul L."/>
            <person name="Aigle M."/>
            <person name="Anthouard V."/>
            <person name="Babour A."/>
            <person name="Barbe V."/>
            <person name="Barnay S."/>
            <person name="Blanchin S."/>
            <person name="Beckerich J.-M."/>
            <person name="Beyne E."/>
            <person name="Bleykasten C."/>
            <person name="Boisrame A."/>
            <person name="Boyer J."/>
            <person name="Cattolico L."/>
            <person name="Confanioleri F."/>
            <person name="de Daruvar A."/>
            <person name="Despons L."/>
            <person name="Fabre E."/>
            <person name="Fairhead C."/>
            <person name="Ferry-Dumazet H."/>
            <person name="Groppi A."/>
            <person name="Hantraye F."/>
            <person name="Hennequin C."/>
            <person name="Jauniaux N."/>
            <person name="Joyet P."/>
            <person name="Kachouri R."/>
            <person name="Kerrest A."/>
            <person name="Koszul R."/>
            <person name="Lemaire M."/>
            <person name="Lesur I."/>
            <person name="Ma L."/>
            <person name="Muller H."/>
            <person name="Nicaud J.-M."/>
            <person name="Nikolski M."/>
            <person name="Oztas S."/>
            <person name="Ozier-Kalogeropoulos O."/>
            <person name="Pellenz S."/>
            <person name="Potier S."/>
            <person name="Richard G.-F."/>
            <person name="Straub M.-L."/>
            <person name="Suleau A."/>
            <person name="Swennen D."/>
            <person name="Tekaia F."/>
            <person name="Wesolowski-Louvel M."/>
            <person name="Westhof E."/>
            <person name="Wirth B."/>
            <person name="Zeniou-Meyer M."/>
            <person name="Zivanovic Y."/>
            <person name="Bolotin-Fukuhara M."/>
            <person name="Thierry A."/>
            <person name="Bouchier C."/>
            <person name="Caudron B."/>
            <person name="Scarpelli C."/>
            <person name="Gaillardin C."/>
            <person name="Weissenbach J."/>
            <person name="Wincker P."/>
            <person name="Souciet J.-L."/>
        </authorList>
    </citation>
    <scope>NUCLEOTIDE SEQUENCE [LARGE SCALE GENOMIC DNA]</scope>
    <source>
        <strain>ATCC 2001 / BCRC 20586 / JCM 3761 / NBRC 0622 / NRRL Y-65 / CBS 138</strain>
    </source>
</reference>
<reference key="5">
    <citation type="journal article" date="1988" name="Proc. Natl. Acad. Sci. U.S.A.">
        <title>Metal-specific synthesis of two metallothioneins and gamma-glutamyl peptides in Candida glabrata.</title>
        <authorList>
            <person name="Mehra R.K."/>
            <person name="Tarbet B.E."/>
            <person name="Gray W.R."/>
            <person name="Winge D.R."/>
        </authorList>
    </citation>
    <scope>PROTEIN SEQUENCE OF 2-20 AND 35-52</scope>
</reference>
<organism>
    <name type="scientific">Candida glabrata (strain ATCC 2001 / BCRC 20586 / JCM 3761 / NBRC 0622 / NRRL Y-65 / CBS 138)</name>
    <name type="common">Yeast</name>
    <name type="synonym">Nakaseomyces glabratus</name>
    <dbReference type="NCBI Taxonomy" id="284593"/>
    <lineage>
        <taxon>Eukaryota</taxon>
        <taxon>Fungi</taxon>
        <taxon>Dikarya</taxon>
        <taxon>Ascomycota</taxon>
        <taxon>Saccharomycotina</taxon>
        <taxon>Saccharomycetes</taxon>
        <taxon>Saccharomycetales</taxon>
        <taxon>Saccharomycetaceae</taxon>
        <taxon>Nakaseomyces</taxon>
    </lineage>
</organism>
<comment type="function">
    <text>The metallothioneins are involved in the cellular sequestration of toxic metal ions.</text>
</comment>
<comment type="induction">
    <text>Both MT-I and MT-II genes are regulated by copper ion in a concentration-dependent fashion, and both are inducible by silver but not by cadmium salts.</text>
</comment>
<comment type="miscellaneous">
    <text>MT-II might bind nearly 10 mol eq of Cu(+).</text>
</comment>
<comment type="similarity">
    <text evidence="2">Belongs to the metallothionein superfamily. Type 10 family.</text>
</comment>
<sequence>MPEQVNCQYDCHCSNCACENTCNCCAKPACACTNSASNECSCQTCKCQTCKC</sequence>
<feature type="initiator methionine" description="Removed" evidence="1">
    <location>
        <position position="1"/>
    </location>
</feature>
<feature type="chain" id="PRO_0000045887" description="Metallothionein-2">
    <location>
        <begin position="2"/>
        <end position="52"/>
    </location>
</feature>
<feature type="chain" id="PRO_0000045888" description="Metallothionein-2'">
    <location>
        <begin position="8"/>
        <end position="52"/>
    </location>
</feature>
<feature type="repeat">
    <location>
        <begin position="43"/>
        <end position="47"/>
    </location>
</feature>
<feature type="repeat">
    <location>
        <begin position="48"/>
        <end position="52"/>
    </location>
</feature>
<accession>P15114</accession>
<name>MT2_CANGA</name>
<keyword id="KW-0186">Copper</keyword>
<keyword id="KW-0903">Direct protein sequencing</keyword>
<keyword id="KW-0479">Metal-binding</keyword>
<keyword id="KW-0480">Metal-thiolate cluster</keyword>
<keyword id="KW-1185">Reference proteome</keyword>
<keyword id="KW-0677">Repeat</keyword>
<dbReference type="EMBL" id="J05134">
    <property type="protein sequence ID" value="AAA35273.1"/>
    <property type="molecule type" value="Genomic_DNA"/>
</dbReference>
<dbReference type="EMBL" id="J05398">
    <property type="protein sequence ID" value="AAA35274.1"/>
    <property type="molecule type" value="Genomic_DNA"/>
</dbReference>
<dbReference type="EMBL" id="M86727">
    <property type="protein sequence ID" value="AAA35275.1"/>
    <property type="molecule type" value="Genomic_DNA"/>
</dbReference>
<dbReference type="EMBL" id="CR380954">
    <property type="protein sequence ID" value="CAG59913.1"/>
    <property type="molecule type" value="Genomic_DNA"/>
</dbReference>
<dbReference type="EMBL" id="CR380954">
    <property type="protein sequence ID" value="CAG59914.1"/>
    <property type="molecule type" value="Genomic_DNA"/>
</dbReference>
<dbReference type="PIR" id="B31252">
    <property type="entry name" value="B31252"/>
</dbReference>
<dbReference type="PIR" id="JC1197">
    <property type="entry name" value="JC1197"/>
</dbReference>
<dbReference type="RefSeq" id="XP_002999586.1">
    <property type="nucleotide sequence ID" value="XM_002999540.1"/>
</dbReference>
<dbReference type="RefSeq" id="XP_446980.1">
    <property type="nucleotide sequence ID" value="XM_446980.1"/>
</dbReference>
<dbReference type="RefSeq" id="XP_446981.1">
    <property type="nucleotide sequence ID" value="XM_446981.1"/>
</dbReference>
<dbReference type="STRING" id="284593.P15114"/>
<dbReference type="EnsemblFungi" id="CAGL0H04257g-T">
    <property type="protein sequence ID" value="CAGL0H04257g-T-p1"/>
    <property type="gene ID" value="CAGL0H04257g"/>
</dbReference>
<dbReference type="EnsemblFungi" id="CAGL0H04279g-T">
    <property type="protein sequence ID" value="CAGL0H04279g-T-p1"/>
    <property type="gene ID" value="CAGL0H04279g"/>
</dbReference>
<dbReference type="EnsemblFungi" id="CAGL0L01831g-T">
    <property type="protein sequence ID" value="CAGL0L01831g-T-p1"/>
    <property type="gene ID" value="CAGL0L01831g"/>
</dbReference>
<dbReference type="GeneID" id="2888780"/>
<dbReference type="GeneID" id="2888781"/>
<dbReference type="KEGG" id="cgr:2888780"/>
<dbReference type="KEGG" id="cgr:2888781"/>
<dbReference type="KEGG" id="cgr:9488054"/>
<dbReference type="CGD" id="CAL0135114">
    <property type="gene designation" value="CAGL0L01831g"/>
</dbReference>
<dbReference type="CGD" id="CAL0131544">
    <property type="gene designation" value="MT-II"/>
</dbReference>
<dbReference type="CGD" id="CAL0129811">
    <property type="gene designation" value="MT-IIB"/>
</dbReference>
<dbReference type="VEuPathDB" id="FungiDB:B1J91_H04257g1"/>
<dbReference type="VEuPathDB" id="FungiDB:B1J91_H04257g2"/>
<dbReference type="VEuPathDB" id="FungiDB:B1J91_H04257g3"/>
<dbReference type="VEuPathDB" id="FungiDB:B1J91_H04257g4"/>
<dbReference type="VEuPathDB" id="FungiDB:B1J91_H04279g1"/>
<dbReference type="VEuPathDB" id="FungiDB:B1J91_H04279g2"/>
<dbReference type="VEuPathDB" id="FungiDB:B1J91_H04279g3"/>
<dbReference type="VEuPathDB" id="FungiDB:B1J91_H04279g4"/>
<dbReference type="VEuPathDB" id="FungiDB:B1J91_L01831g"/>
<dbReference type="VEuPathDB" id="FungiDB:CAGL0H04257g"/>
<dbReference type="VEuPathDB" id="FungiDB:CAGL0H04279g"/>
<dbReference type="VEuPathDB" id="FungiDB:CAGL0L01831g"/>
<dbReference type="HOGENOM" id="CLU_3087043_0_0_1"/>
<dbReference type="InParanoid" id="P15114"/>
<dbReference type="OMA" id="CACENTC"/>
<dbReference type="Proteomes" id="UP000002428">
    <property type="component" value="Chromosome H"/>
</dbReference>
<dbReference type="GO" id="GO:0005507">
    <property type="term" value="F:copper ion binding"/>
    <property type="evidence" value="ECO:0000314"/>
    <property type="project" value="CGD"/>
</dbReference>
<dbReference type="GO" id="GO:0071280">
    <property type="term" value="P:cellular response to copper ion"/>
    <property type="evidence" value="ECO:0000314"/>
    <property type="project" value="CGD"/>
</dbReference>
<dbReference type="GO" id="GO:0071292">
    <property type="term" value="P:cellular response to silver ion"/>
    <property type="evidence" value="ECO:0000314"/>
    <property type="project" value="CGD"/>
</dbReference>
<protein>
    <recommendedName>
        <fullName>Metallothionein-2</fullName>
        <shortName>MT-2</shortName>
    </recommendedName>
    <alternativeName>
        <fullName>Metallothionein-II</fullName>
        <shortName>MT-II</shortName>
    </alternativeName>
    <component>
        <recommendedName>
            <fullName>Metallothionein-2'</fullName>
            <shortName>MT-2'</shortName>
        </recommendedName>
        <alternativeName>
            <fullName>Metallothionein-II'</fullName>
            <shortName>MT-II'</shortName>
        </alternativeName>
    </component>
</protein>